<proteinExistence type="evidence at protein level"/>
<gene>
    <name evidence="9" type="primary">ref-1</name>
    <name evidence="9" type="ORF">T01E8.2</name>
</gene>
<keyword id="KW-0238">DNA-binding</keyword>
<keyword id="KW-0524">Neurogenesis</keyword>
<keyword id="KW-0539">Nucleus</keyword>
<keyword id="KW-1185">Reference proteome</keyword>
<keyword id="KW-0677">Repeat</keyword>
<keyword id="KW-0804">Transcription</keyword>
<keyword id="KW-0805">Transcription regulation</keyword>
<evidence type="ECO:0000255" key="1">
    <source>
        <dbReference type="PROSITE-ProRule" id="PRU00981"/>
    </source>
</evidence>
<evidence type="ECO:0000256" key="2">
    <source>
        <dbReference type="SAM" id="MobiDB-lite"/>
    </source>
</evidence>
<evidence type="ECO:0000269" key="3">
    <source>
    </source>
</evidence>
<evidence type="ECO:0000269" key="4">
    <source>
    </source>
</evidence>
<evidence type="ECO:0000269" key="5">
    <source>
    </source>
</evidence>
<evidence type="ECO:0000305" key="6"/>
<evidence type="ECO:0000312" key="7">
    <source>
        <dbReference type="EMBL" id="AAK52772.1"/>
    </source>
</evidence>
<evidence type="ECO:0000312" key="8">
    <source>
        <dbReference type="Proteomes" id="UP000001940"/>
    </source>
</evidence>
<evidence type="ECO:0000312" key="9">
    <source>
        <dbReference type="WormBase" id="T01E8.2"/>
    </source>
</evidence>
<sequence>MVLISTPPPAYAHNRKTSQEKKRRDEINAKIKELQLLIQNESDNEKMTQGDVLNRAVEVVSRMETESPGPSSNPNRKGFFDGFRSIESLTYSFIKSLGVNSDVCQDFVQRAKQFFDRERSSLLSTVSGKSKRRSESEILHSSMSYRSQSSSPSTSESGITIDRKEVKKNREQDRRDRQGEAFDALKNFIIENKLMTSHQVEKMQRLNTLDIIIAYIQNKKHNFVSRSDQEQSLYAHAIAEGKKTAKNIAFQFFKSDRHLVVRCADLEKFFEFSLSPKPLFGFPSMPIPIPPPSFPIFPFRPFPFFPMPMAPMATSPKSQQSPSYSLDSPPPSSDTSSSSIETPSTPNENSNSNPKASRKSKLFRPWE</sequence>
<feature type="chain" id="PRO_0000457894" description="Regulator of fusion ref-1">
    <location>
        <begin position="1"/>
        <end position="367"/>
    </location>
</feature>
<feature type="domain" description="bHLH 1" evidence="1">
    <location>
        <begin position="11"/>
        <end position="63"/>
    </location>
</feature>
<feature type="domain" description="bHLH 2" evidence="1">
    <location>
        <begin position="162"/>
        <end position="219"/>
    </location>
</feature>
<feature type="region of interest" description="Disordered" evidence="2">
    <location>
        <begin position="1"/>
        <end position="24"/>
    </location>
</feature>
<feature type="region of interest" description="Basic motif 1" evidence="1">
    <location>
        <begin position="11"/>
        <end position="24"/>
    </location>
</feature>
<feature type="region of interest" description="Helix-loop-helix motif 1" evidence="1">
    <location>
        <begin position="25"/>
        <end position="63"/>
    </location>
</feature>
<feature type="region of interest" description="Disordered" evidence="2">
    <location>
        <begin position="133"/>
        <end position="177"/>
    </location>
</feature>
<feature type="region of interest" description="Basic motif 2" evidence="1">
    <location>
        <begin position="162"/>
        <end position="175"/>
    </location>
</feature>
<feature type="region of interest" description="Helix-loop-helix motif 2" evidence="1">
    <location>
        <begin position="176"/>
        <end position="219"/>
    </location>
</feature>
<feature type="region of interest" description="Disordered" evidence="2">
    <location>
        <begin position="313"/>
        <end position="367"/>
    </location>
</feature>
<feature type="compositionally biased region" description="Pro residues" evidence="2">
    <location>
        <begin position="1"/>
        <end position="10"/>
    </location>
</feature>
<feature type="compositionally biased region" description="Low complexity" evidence="2">
    <location>
        <begin position="141"/>
        <end position="157"/>
    </location>
</feature>
<feature type="compositionally biased region" description="Basic and acidic residues" evidence="2">
    <location>
        <begin position="161"/>
        <end position="177"/>
    </location>
</feature>
<feature type="compositionally biased region" description="Low complexity" evidence="2">
    <location>
        <begin position="313"/>
        <end position="354"/>
    </location>
</feature>
<feature type="compositionally biased region" description="Basic residues" evidence="2">
    <location>
        <begin position="356"/>
        <end position="367"/>
    </location>
</feature>
<feature type="mutagenesis site" description="In mu220; fails to downregulate lin-12 on the left of the E8 primordium. Nearly all embryos lack the characteristic intestinal twist. Affects the pattern of Pn.p cell fusion in larval development in hermaphrodites; frequently has between one and three ectopic pseudovulvae in the posterior body region. Occasionally has misshapen heads in larvae of either sex. Ectopic expression of multiple markers of an entire neuronal sublineage only on the right side of the animal. In a mab-5 mutant background, P1.p and P2.p cells often remain unfused." evidence="3 4 5">
    <original>R</original>
    <variation>Q</variation>
    <location>
        <position position="24"/>
    </location>
</feature>
<feature type="mutagenesis site" description="In oy40; ectopic expression of multiple markers of an entire neuronal sublineage only on the right side of the animal." evidence="5">
    <original>G</original>
    <variation>R</variation>
    <location>
        <position position="82"/>
    </location>
</feature>
<reference evidence="7" key="1">
    <citation type="journal article" date="2001" name="Development">
        <title>REF-1, a protein with two bHLH domains, alters the pattern of cell fusion in C. elegans by regulating Hox protein activity.</title>
        <authorList>
            <person name="Alper S."/>
            <person name="Kenyon C."/>
        </authorList>
    </citation>
    <scope>NUCLEOTIDE SEQUENCE [MRNA]</scope>
    <scope>FUNCTION</scope>
    <scope>DISRUPTION PHENOTYPE</scope>
    <scope>MUTAGENESIS OF ARG-24</scope>
</reference>
<reference evidence="8" key="2">
    <citation type="journal article" date="1998" name="Science">
        <title>Genome sequence of the nematode C. elegans: a platform for investigating biology.</title>
        <authorList>
            <consortium name="The C. elegans sequencing consortium"/>
        </authorList>
    </citation>
    <scope>NUCLEOTIDE SEQUENCE [LARGE SCALE GENOMIC DNA]</scope>
    <source>
        <strain evidence="8">Bristol N2</strain>
    </source>
</reference>
<reference evidence="6" key="3">
    <citation type="journal article" date="2005" name="Dev. Cell">
        <title>The REF-1 family of bHLH transcription factors pattern C. elegans embryos through Notch-dependent and Notch-independent pathways.</title>
        <authorList>
            <person name="Neves A."/>
            <person name="Priess J.R."/>
        </authorList>
    </citation>
    <scope>FUNCTION</scope>
    <scope>INTERACTION WITH UNC-37</scope>
    <scope>DEVELOPMENTAL STAGE</scope>
    <scope>MUTAGENESIS OF ARG-24</scope>
</reference>
<reference evidence="6" key="4">
    <citation type="journal article" date="2006" name="Dev. Biol.">
        <title>Regulation of neuronal lineage decisions by the HES-related bHLH protein REF-1.</title>
        <authorList>
            <person name="Lanjuin A."/>
            <person name="Claggett J."/>
            <person name="Shibuya M."/>
            <person name="Hunter C.P."/>
            <person name="Sengupta P."/>
        </authorList>
    </citation>
    <scope>FUNCTION</scope>
    <scope>SUBCELLULAR LOCATION</scope>
    <scope>DEVELOPMENTAL STAGE</scope>
    <scope>MUTAGENESIS OF GLY-82</scope>
</reference>
<accession>G5EEQ5</accession>
<protein>
    <recommendedName>
        <fullName evidence="9">Regulator of fusion ref-1</fullName>
    </recommendedName>
</protein>
<comment type="function">
    <text evidence="3 4 5">Probable transcription factor (PubMed:11311160, PubMed:15935776, PubMed:16376329). Binds 5'-TGCCACGTGTCCA-3' in vitro, probably via the E-box motif 5'-CA[TC][AG]TG-3' (PubMed:15935776). Acts in embryonic development in a Notch-dependent manner, perhaps as a direct target of transcriptional regulator lag-1 in the Notch signaling pathway (PubMed:15935776, PubMed:16376329). Also acts in embryonic development in a Notch-independent manner (PubMed:15935776). Plays a role in both Notch-dependent and -independent pathways in the execution of neuronal lineage decisions in the embryo (PubMed:16376329). Also involved in regulating cell fate leading to formation of neuronal structures known as postdeirids (PubMed:11311160). Involved in the pattern of cell fusion with a large syncytium known as hyp-7, during larval development, in hermaphrodites (PubMed:11311160). Plays a role in regulating the activity of homeobox protein mab-5 in Pn.p cells (PubMed:11311160).</text>
</comment>
<comment type="subunit">
    <text evidence="4">Interacts with unc-37.</text>
</comment>
<comment type="subcellular location">
    <subcellularLocation>
        <location evidence="1 5">Nucleus</location>
    </subcellularLocation>
</comment>
<comment type="developmental stage">
    <text evidence="4 5">Expressed widely and dynamically in the embryo (PubMed:16376329). Expressed in cells of the E blastomere lineage; these go on to form the intestinal primordium (PubMed:15935776). Expressed asymmetrically in the left, but not the right, E4 and E8 cells; however, expression in E8 cells disappears late in the E8 stage, then is observed on the right side of the E16 primordium (PubMed:15935776). These expression patterns are dependent on Notch signaling (PubMed:15935776). Also expressed in a subset of the AB anterior blastomere lineage, including the descendants of the ABa cells, such as ABarpap, which are precursors of the right side of the head (PubMed:15935776). Expressed in ABplp(a/p), ABalp(a/p), ABprp(a/p), ABara(a/p), and weakly in the ABarp(a/p) blastomeres at approximately 100 minutes after fertilization (PubMed:16376329). Expressed in a Notch-independent manner in the EMS lineage, in all EMS granddaughters beginning at the 24-cell stage (PubMed:15935776).</text>
</comment>
<comment type="disruption phenotype">
    <text evidence="3">RNAi-mediated knockdown causes the formation of misshapen heads as well as ectopic V6 postdeirids.</text>
</comment>
<organism evidence="8">
    <name type="scientific">Caenorhabditis elegans</name>
    <dbReference type="NCBI Taxonomy" id="6239"/>
    <lineage>
        <taxon>Eukaryota</taxon>
        <taxon>Metazoa</taxon>
        <taxon>Ecdysozoa</taxon>
        <taxon>Nematoda</taxon>
        <taxon>Chromadorea</taxon>
        <taxon>Rhabditida</taxon>
        <taxon>Rhabditina</taxon>
        <taxon>Rhabditomorpha</taxon>
        <taxon>Rhabditoidea</taxon>
        <taxon>Rhabditidae</taxon>
        <taxon>Peloderinae</taxon>
        <taxon>Caenorhabditis</taxon>
    </lineage>
</organism>
<name>REF1_CAEEL</name>
<dbReference type="EMBL" id="AF358857">
    <property type="protein sequence ID" value="AAK52772.1"/>
    <property type="molecule type" value="mRNA"/>
</dbReference>
<dbReference type="EMBL" id="BX284602">
    <property type="protein sequence ID" value="CAA88744.1"/>
    <property type="molecule type" value="Genomic_DNA"/>
</dbReference>
<dbReference type="PIR" id="T24298">
    <property type="entry name" value="T24298"/>
</dbReference>
<dbReference type="RefSeq" id="NP_496204.1">
    <property type="nucleotide sequence ID" value="NM_063803.6"/>
</dbReference>
<dbReference type="FunCoup" id="G5EEQ5">
    <property type="interactions" value="1423"/>
</dbReference>
<dbReference type="STRING" id="6239.T01E8.2.1"/>
<dbReference type="PaxDb" id="6239-T01E8.2"/>
<dbReference type="EnsemblMetazoa" id="T01E8.2.1">
    <property type="protein sequence ID" value="T01E8.2.1"/>
    <property type="gene ID" value="WBGene00004334"/>
</dbReference>
<dbReference type="GeneID" id="174585"/>
<dbReference type="KEGG" id="cel:CELE_T01E8.2"/>
<dbReference type="AGR" id="WB:WBGene00004334"/>
<dbReference type="CTD" id="174585"/>
<dbReference type="WormBase" id="T01E8.2">
    <property type="protein sequence ID" value="CE02306"/>
    <property type="gene ID" value="WBGene00004334"/>
    <property type="gene designation" value="ref-1"/>
</dbReference>
<dbReference type="eggNOG" id="ENOG502RPZV">
    <property type="taxonomic scope" value="Eukaryota"/>
</dbReference>
<dbReference type="HOGENOM" id="CLU_748500_0_0_1"/>
<dbReference type="InParanoid" id="G5EEQ5"/>
<dbReference type="OMA" id="CADLEKF"/>
<dbReference type="OrthoDB" id="5858749at2759"/>
<dbReference type="PRO" id="PR:G5EEQ5"/>
<dbReference type="Proteomes" id="UP000001940">
    <property type="component" value="Chromosome II"/>
</dbReference>
<dbReference type="Bgee" id="WBGene00004334">
    <property type="expression patterns" value="Expressed in embryo and 3 other cell types or tissues"/>
</dbReference>
<dbReference type="GO" id="GO:0005634">
    <property type="term" value="C:nucleus"/>
    <property type="evidence" value="ECO:0000314"/>
    <property type="project" value="WormBase"/>
</dbReference>
<dbReference type="GO" id="GO:0046983">
    <property type="term" value="F:protein dimerization activity"/>
    <property type="evidence" value="ECO:0007669"/>
    <property type="project" value="InterPro"/>
</dbReference>
<dbReference type="GO" id="GO:0000978">
    <property type="term" value="F:RNA polymerase II cis-regulatory region sequence-specific DNA binding"/>
    <property type="evidence" value="ECO:0000318"/>
    <property type="project" value="GO_Central"/>
</dbReference>
<dbReference type="GO" id="GO:0009957">
    <property type="term" value="P:epidermal cell fate specification"/>
    <property type="evidence" value="ECO:0000316"/>
    <property type="project" value="WormBase"/>
</dbReference>
<dbReference type="GO" id="GO:0000122">
    <property type="term" value="P:negative regulation of transcription by RNA polymerase II"/>
    <property type="evidence" value="ECO:0000316"/>
    <property type="project" value="WormBase"/>
</dbReference>
<dbReference type="GO" id="GO:0045138">
    <property type="term" value="P:nematode male tail tip morphogenesis"/>
    <property type="evidence" value="ECO:0000316"/>
    <property type="project" value="WormBase"/>
</dbReference>
<dbReference type="GO" id="GO:0048666">
    <property type="term" value="P:neuron development"/>
    <property type="evidence" value="ECO:0000315"/>
    <property type="project" value="WormBase"/>
</dbReference>
<dbReference type="GO" id="GO:0050767">
    <property type="term" value="P:regulation of neurogenesis"/>
    <property type="evidence" value="ECO:0000318"/>
    <property type="project" value="GO_Central"/>
</dbReference>
<dbReference type="CDD" id="cd00083">
    <property type="entry name" value="bHLH_SF"/>
    <property type="match status" value="1"/>
</dbReference>
<dbReference type="Gene3D" id="4.10.280.10">
    <property type="entry name" value="Helix-loop-helix DNA-binding domain"/>
    <property type="match status" value="1"/>
</dbReference>
<dbReference type="InterPro" id="IPR011598">
    <property type="entry name" value="bHLH_dom"/>
</dbReference>
<dbReference type="InterPro" id="IPR036638">
    <property type="entry name" value="HLH_DNA-bd_sf"/>
</dbReference>
<dbReference type="Pfam" id="PF00010">
    <property type="entry name" value="HLH"/>
    <property type="match status" value="2"/>
</dbReference>
<dbReference type="SMART" id="SM00353">
    <property type="entry name" value="HLH"/>
    <property type="match status" value="2"/>
</dbReference>
<dbReference type="SUPFAM" id="SSF47459">
    <property type="entry name" value="HLH, helix-loop-helix DNA-binding domain"/>
    <property type="match status" value="2"/>
</dbReference>
<dbReference type="PROSITE" id="PS50888">
    <property type="entry name" value="BHLH"/>
    <property type="match status" value="2"/>
</dbReference>